<proteinExistence type="inferred from homology"/>
<gene>
    <name evidence="1" type="primary">tig</name>
    <name type="ordered locus">HAPS_1479</name>
</gene>
<evidence type="ECO:0000255" key="1">
    <source>
        <dbReference type="HAMAP-Rule" id="MF_00303"/>
    </source>
</evidence>
<accession>B8F6T9</accession>
<sequence length="431" mass="47856">MSISIETLEGLQRRVTVTVAADKIEAGYKEQLKGYAKNARVDGFRKGKVPHSIIEQRYGLAARQDVLSEEMQRAFFDVVIAEKINLAGRPTFTPNNYQPGQDFSFVATFEVFPEVELKGLENIEVEKPVVEITEADLDKMVDVLRKQQATFAETTEAAKADDRVTIDFVGSVDGEEFEGGKASDFVLAMGQGRMIPGFEEGIVGHKAGEQFDIDVIFPAEYHAENLKGKAAKFAITLKKVENIVLPELTEEFVKKFGSAKTVEELRVEIKKNMQRELKNALTTRVKNQVINGLLANNDIEVPSSAVAEEVDVLRQQAVQRFGGKPEMAAQLPAELFEVEAKRRVQVGLLLSSVITSNELKVDEDRVKETISELASAYEQPAEVVEYYAKNPRLTDNIRNVVLEEQAVEAVLAKAKVTEKASSFDEVMSHQG</sequence>
<keyword id="KW-0131">Cell cycle</keyword>
<keyword id="KW-0132">Cell division</keyword>
<keyword id="KW-0143">Chaperone</keyword>
<keyword id="KW-0963">Cytoplasm</keyword>
<keyword id="KW-0413">Isomerase</keyword>
<keyword id="KW-1185">Reference proteome</keyword>
<keyword id="KW-0697">Rotamase</keyword>
<comment type="function">
    <text evidence="1">Involved in protein export. Acts as a chaperone by maintaining the newly synthesized protein in an open conformation. Functions as a peptidyl-prolyl cis-trans isomerase.</text>
</comment>
<comment type="catalytic activity">
    <reaction evidence="1">
        <text>[protein]-peptidylproline (omega=180) = [protein]-peptidylproline (omega=0)</text>
        <dbReference type="Rhea" id="RHEA:16237"/>
        <dbReference type="Rhea" id="RHEA-COMP:10747"/>
        <dbReference type="Rhea" id="RHEA-COMP:10748"/>
        <dbReference type="ChEBI" id="CHEBI:83833"/>
        <dbReference type="ChEBI" id="CHEBI:83834"/>
        <dbReference type="EC" id="5.2.1.8"/>
    </reaction>
</comment>
<comment type="subcellular location">
    <subcellularLocation>
        <location>Cytoplasm</location>
    </subcellularLocation>
    <text evidence="1">About half TF is bound to the ribosome near the polypeptide exit tunnel while the other half is free in the cytoplasm.</text>
</comment>
<comment type="domain">
    <text evidence="1">Consists of 3 domains; the N-terminus binds the ribosome, the middle domain has PPIase activity, while the C-terminus has intrinsic chaperone activity on its own.</text>
</comment>
<comment type="similarity">
    <text evidence="1">Belongs to the FKBP-type PPIase family. Tig subfamily.</text>
</comment>
<reference key="1">
    <citation type="journal article" date="2009" name="J. Bacteriol.">
        <title>Complete genome sequence of Haemophilus parasuis SH0165.</title>
        <authorList>
            <person name="Yue M."/>
            <person name="Yang F."/>
            <person name="Yang J."/>
            <person name="Bei W."/>
            <person name="Cai X."/>
            <person name="Chen L."/>
            <person name="Dong J."/>
            <person name="Zhou R."/>
            <person name="Jin M."/>
            <person name="Jin Q."/>
            <person name="Chen H."/>
        </authorList>
    </citation>
    <scope>NUCLEOTIDE SEQUENCE [LARGE SCALE GENOMIC DNA]</scope>
    <source>
        <strain>SH0165</strain>
    </source>
</reference>
<name>TIG_GLAP5</name>
<organism>
    <name type="scientific">Glaesserella parasuis serovar 5 (strain SH0165)</name>
    <name type="common">Haemophilus parasuis</name>
    <dbReference type="NCBI Taxonomy" id="557723"/>
    <lineage>
        <taxon>Bacteria</taxon>
        <taxon>Pseudomonadati</taxon>
        <taxon>Pseudomonadota</taxon>
        <taxon>Gammaproteobacteria</taxon>
        <taxon>Pasteurellales</taxon>
        <taxon>Pasteurellaceae</taxon>
        <taxon>Glaesserella</taxon>
    </lineage>
</organism>
<protein>
    <recommendedName>
        <fullName evidence="1">Trigger factor</fullName>
        <shortName evidence="1">TF</shortName>
        <ecNumber evidence="1">5.2.1.8</ecNumber>
    </recommendedName>
    <alternativeName>
        <fullName evidence="1">PPIase</fullName>
    </alternativeName>
</protein>
<feature type="chain" id="PRO_1000198160" description="Trigger factor">
    <location>
        <begin position="1"/>
        <end position="431"/>
    </location>
</feature>
<feature type="domain" description="PPIase FKBP-type" evidence="1">
    <location>
        <begin position="161"/>
        <end position="246"/>
    </location>
</feature>
<dbReference type="EC" id="5.2.1.8" evidence="1"/>
<dbReference type="EMBL" id="CP001321">
    <property type="protein sequence ID" value="ACL33041.1"/>
    <property type="molecule type" value="Genomic_DNA"/>
</dbReference>
<dbReference type="RefSeq" id="WP_015939794.1">
    <property type="nucleotide sequence ID" value="NC_011852.1"/>
</dbReference>
<dbReference type="SMR" id="B8F6T9"/>
<dbReference type="STRING" id="557723.HAPS_1479"/>
<dbReference type="KEGG" id="hap:HAPS_1479"/>
<dbReference type="PATRIC" id="fig|557723.8.peg.1449"/>
<dbReference type="HOGENOM" id="CLU_033058_2_0_6"/>
<dbReference type="Proteomes" id="UP000006743">
    <property type="component" value="Chromosome"/>
</dbReference>
<dbReference type="GO" id="GO:0005737">
    <property type="term" value="C:cytoplasm"/>
    <property type="evidence" value="ECO:0007669"/>
    <property type="project" value="UniProtKB-SubCell"/>
</dbReference>
<dbReference type="GO" id="GO:0003755">
    <property type="term" value="F:peptidyl-prolyl cis-trans isomerase activity"/>
    <property type="evidence" value="ECO:0007669"/>
    <property type="project" value="UniProtKB-UniRule"/>
</dbReference>
<dbReference type="GO" id="GO:0044183">
    <property type="term" value="F:protein folding chaperone"/>
    <property type="evidence" value="ECO:0007669"/>
    <property type="project" value="TreeGrafter"/>
</dbReference>
<dbReference type="GO" id="GO:0043022">
    <property type="term" value="F:ribosome binding"/>
    <property type="evidence" value="ECO:0007669"/>
    <property type="project" value="TreeGrafter"/>
</dbReference>
<dbReference type="GO" id="GO:0051083">
    <property type="term" value="P:'de novo' cotranslational protein folding"/>
    <property type="evidence" value="ECO:0007669"/>
    <property type="project" value="TreeGrafter"/>
</dbReference>
<dbReference type="GO" id="GO:0051301">
    <property type="term" value="P:cell division"/>
    <property type="evidence" value="ECO:0007669"/>
    <property type="project" value="UniProtKB-KW"/>
</dbReference>
<dbReference type="GO" id="GO:0061077">
    <property type="term" value="P:chaperone-mediated protein folding"/>
    <property type="evidence" value="ECO:0007669"/>
    <property type="project" value="TreeGrafter"/>
</dbReference>
<dbReference type="GO" id="GO:0015031">
    <property type="term" value="P:protein transport"/>
    <property type="evidence" value="ECO:0007669"/>
    <property type="project" value="UniProtKB-UniRule"/>
</dbReference>
<dbReference type="GO" id="GO:0043335">
    <property type="term" value="P:protein unfolding"/>
    <property type="evidence" value="ECO:0007669"/>
    <property type="project" value="TreeGrafter"/>
</dbReference>
<dbReference type="FunFam" id="3.10.50.40:FF:000001">
    <property type="entry name" value="Trigger factor"/>
    <property type="match status" value="1"/>
</dbReference>
<dbReference type="Gene3D" id="3.10.50.40">
    <property type="match status" value="1"/>
</dbReference>
<dbReference type="Gene3D" id="3.30.70.1050">
    <property type="entry name" value="Trigger factor ribosome-binding domain"/>
    <property type="match status" value="1"/>
</dbReference>
<dbReference type="Gene3D" id="1.10.3120.10">
    <property type="entry name" value="Trigger factor, C-terminal domain"/>
    <property type="match status" value="1"/>
</dbReference>
<dbReference type="HAMAP" id="MF_00303">
    <property type="entry name" value="Trigger_factor_Tig"/>
    <property type="match status" value="1"/>
</dbReference>
<dbReference type="InterPro" id="IPR046357">
    <property type="entry name" value="PPIase_dom_sf"/>
</dbReference>
<dbReference type="InterPro" id="IPR001179">
    <property type="entry name" value="PPIase_FKBP_dom"/>
</dbReference>
<dbReference type="InterPro" id="IPR005215">
    <property type="entry name" value="Trig_fac"/>
</dbReference>
<dbReference type="InterPro" id="IPR008880">
    <property type="entry name" value="Trigger_fac_C"/>
</dbReference>
<dbReference type="InterPro" id="IPR037041">
    <property type="entry name" value="Trigger_fac_C_sf"/>
</dbReference>
<dbReference type="InterPro" id="IPR008881">
    <property type="entry name" value="Trigger_fac_ribosome-bd_bac"/>
</dbReference>
<dbReference type="InterPro" id="IPR036611">
    <property type="entry name" value="Trigger_fac_ribosome-bd_sf"/>
</dbReference>
<dbReference type="InterPro" id="IPR027304">
    <property type="entry name" value="Trigger_fact/SurA_dom_sf"/>
</dbReference>
<dbReference type="NCBIfam" id="TIGR00115">
    <property type="entry name" value="tig"/>
    <property type="match status" value="1"/>
</dbReference>
<dbReference type="PANTHER" id="PTHR30560">
    <property type="entry name" value="TRIGGER FACTOR CHAPERONE AND PEPTIDYL-PROLYL CIS/TRANS ISOMERASE"/>
    <property type="match status" value="1"/>
</dbReference>
<dbReference type="PANTHER" id="PTHR30560:SF3">
    <property type="entry name" value="TRIGGER FACTOR-LIKE PROTEIN TIG, CHLOROPLASTIC"/>
    <property type="match status" value="1"/>
</dbReference>
<dbReference type="Pfam" id="PF00254">
    <property type="entry name" value="FKBP_C"/>
    <property type="match status" value="1"/>
</dbReference>
<dbReference type="Pfam" id="PF05698">
    <property type="entry name" value="Trigger_C"/>
    <property type="match status" value="1"/>
</dbReference>
<dbReference type="Pfam" id="PF05697">
    <property type="entry name" value="Trigger_N"/>
    <property type="match status" value="1"/>
</dbReference>
<dbReference type="PIRSF" id="PIRSF003095">
    <property type="entry name" value="Trigger_factor"/>
    <property type="match status" value="1"/>
</dbReference>
<dbReference type="SUPFAM" id="SSF54534">
    <property type="entry name" value="FKBP-like"/>
    <property type="match status" value="1"/>
</dbReference>
<dbReference type="SUPFAM" id="SSF109998">
    <property type="entry name" value="Triger factor/SurA peptide-binding domain-like"/>
    <property type="match status" value="1"/>
</dbReference>
<dbReference type="SUPFAM" id="SSF102735">
    <property type="entry name" value="Trigger factor ribosome-binding domain"/>
    <property type="match status" value="1"/>
</dbReference>
<dbReference type="PROSITE" id="PS50059">
    <property type="entry name" value="FKBP_PPIASE"/>
    <property type="match status" value="1"/>
</dbReference>